<keyword id="KW-0963">Cytoplasm</keyword>
<keyword id="KW-0342">GTP-binding</keyword>
<keyword id="KW-0378">Hydrolase</keyword>
<keyword id="KW-0460">Magnesium</keyword>
<keyword id="KW-0479">Metal-binding</keyword>
<keyword id="KW-0547">Nucleotide-binding</keyword>
<keyword id="KW-1185">Reference proteome</keyword>
<accession>O67849</accession>
<gene>
    <name evidence="1" type="primary">obg</name>
    <name type="ordered locus">aq_2069</name>
</gene>
<name>OBG_AQUAE</name>
<dbReference type="EC" id="3.6.5.-" evidence="1"/>
<dbReference type="EMBL" id="AE000657">
    <property type="protein sequence ID" value="AAC07816.1"/>
    <property type="molecule type" value="Genomic_DNA"/>
</dbReference>
<dbReference type="PIR" id="E70477">
    <property type="entry name" value="E70477"/>
</dbReference>
<dbReference type="RefSeq" id="NP_214418.1">
    <property type="nucleotide sequence ID" value="NC_000918.1"/>
</dbReference>
<dbReference type="RefSeq" id="WP_010881354.1">
    <property type="nucleotide sequence ID" value="NC_000918.1"/>
</dbReference>
<dbReference type="SMR" id="O67849"/>
<dbReference type="FunCoup" id="O67849">
    <property type="interactions" value="438"/>
</dbReference>
<dbReference type="STRING" id="224324.aq_2069"/>
<dbReference type="EnsemblBacteria" id="AAC07816">
    <property type="protein sequence ID" value="AAC07816"/>
    <property type="gene ID" value="aq_2069"/>
</dbReference>
<dbReference type="KEGG" id="aae:aq_2069"/>
<dbReference type="PATRIC" id="fig|224324.8.peg.1595"/>
<dbReference type="eggNOG" id="COG0536">
    <property type="taxonomic scope" value="Bacteria"/>
</dbReference>
<dbReference type="HOGENOM" id="CLU_011747_2_0_0"/>
<dbReference type="InParanoid" id="O67849"/>
<dbReference type="OrthoDB" id="9807318at2"/>
<dbReference type="Proteomes" id="UP000000798">
    <property type="component" value="Chromosome"/>
</dbReference>
<dbReference type="GO" id="GO:0005737">
    <property type="term" value="C:cytoplasm"/>
    <property type="evidence" value="ECO:0007669"/>
    <property type="project" value="UniProtKB-SubCell"/>
</dbReference>
<dbReference type="GO" id="GO:0005525">
    <property type="term" value="F:GTP binding"/>
    <property type="evidence" value="ECO:0000318"/>
    <property type="project" value="GO_Central"/>
</dbReference>
<dbReference type="GO" id="GO:0003924">
    <property type="term" value="F:GTPase activity"/>
    <property type="evidence" value="ECO:0000318"/>
    <property type="project" value="GO_Central"/>
</dbReference>
<dbReference type="GO" id="GO:0000287">
    <property type="term" value="F:magnesium ion binding"/>
    <property type="evidence" value="ECO:0007669"/>
    <property type="project" value="InterPro"/>
</dbReference>
<dbReference type="GO" id="GO:0042254">
    <property type="term" value="P:ribosome biogenesis"/>
    <property type="evidence" value="ECO:0007669"/>
    <property type="project" value="UniProtKB-UniRule"/>
</dbReference>
<dbReference type="CDD" id="cd01898">
    <property type="entry name" value="Obg"/>
    <property type="match status" value="1"/>
</dbReference>
<dbReference type="FunFam" id="2.70.210.12:FF:000001">
    <property type="entry name" value="GTPase Obg"/>
    <property type="match status" value="1"/>
</dbReference>
<dbReference type="Gene3D" id="2.70.210.12">
    <property type="entry name" value="GTP1/OBG domain"/>
    <property type="match status" value="1"/>
</dbReference>
<dbReference type="Gene3D" id="3.40.50.300">
    <property type="entry name" value="P-loop containing nucleotide triphosphate hydrolases"/>
    <property type="match status" value="1"/>
</dbReference>
<dbReference type="HAMAP" id="MF_01454">
    <property type="entry name" value="GTPase_Obg"/>
    <property type="match status" value="1"/>
</dbReference>
<dbReference type="InterPro" id="IPR031167">
    <property type="entry name" value="G_OBG"/>
</dbReference>
<dbReference type="InterPro" id="IPR006073">
    <property type="entry name" value="GTP-bd"/>
</dbReference>
<dbReference type="InterPro" id="IPR014100">
    <property type="entry name" value="GTP-bd_Obg/CgtA"/>
</dbReference>
<dbReference type="InterPro" id="IPR006169">
    <property type="entry name" value="GTP1_OBG_dom"/>
</dbReference>
<dbReference type="InterPro" id="IPR036726">
    <property type="entry name" value="GTP1_OBG_dom_sf"/>
</dbReference>
<dbReference type="InterPro" id="IPR045086">
    <property type="entry name" value="OBG_GTPase"/>
</dbReference>
<dbReference type="InterPro" id="IPR027417">
    <property type="entry name" value="P-loop_NTPase"/>
</dbReference>
<dbReference type="InterPro" id="IPR005225">
    <property type="entry name" value="Small_GTP-bd"/>
</dbReference>
<dbReference type="NCBIfam" id="TIGR02729">
    <property type="entry name" value="Obg_CgtA"/>
    <property type="match status" value="1"/>
</dbReference>
<dbReference type="NCBIfam" id="NF008954">
    <property type="entry name" value="PRK12296.1"/>
    <property type="match status" value="1"/>
</dbReference>
<dbReference type="NCBIfam" id="NF008955">
    <property type="entry name" value="PRK12297.1"/>
    <property type="match status" value="1"/>
</dbReference>
<dbReference type="NCBIfam" id="NF008956">
    <property type="entry name" value="PRK12299.1"/>
    <property type="match status" value="1"/>
</dbReference>
<dbReference type="NCBIfam" id="TIGR00231">
    <property type="entry name" value="small_GTP"/>
    <property type="match status" value="1"/>
</dbReference>
<dbReference type="PANTHER" id="PTHR11702">
    <property type="entry name" value="DEVELOPMENTALLY REGULATED GTP-BINDING PROTEIN-RELATED"/>
    <property type="match status" value="1"/>
</dbReference>
<dbReference type="PANTHER" id="PTHR11702:SF31">
    <property type="entry name" value="MITOCHONDRIAL RIBOSOME-ASSOCIATED GTPASE 2"/>
    <property type="match status" value="1"/>
</dbReference>
<dbReference type="Pfam" id="PF01018">
    <property type="entry name" value="GTP1_OBG"/>
    <property type="match status" value="1"/>
</dbReference>
<dbReference type="Pfam" id="PF01926">
    <property type="entry name" value="MMR_HSR1"/>
    <property type="match status" value="1"/>
</dbReference>
<dbReference type="PIRSF" id="PIRSF002401">
    <property type="entry name" value="GTP_bd_Obg/CgtA"/>
    <property type="match status" value="1"/>
</dbReference>
<dbReference type="PRINTS" id="PR00326">
    <property type="entry name" value="GTP1OBG"/>
</dbReference>
<dbReference type="SUPFAM" id="SSF82051">
    <property type="entry name" value="Obg GTP-binding protein N-terminal domain"/>
    <property type="match status" value="1"/>
</dbReference>
<dbReference type="SUPFAM" id="SSF52540">
    <property type="entry name" value="P-loop containing nucleoside triphosphate hydrolases"/>
    <property type="match status" value="1"/>
</dbReference>
<dbReference type="PROSITE" id="PS51710">
    <property type="entry name" value="G_OBG"/>
    <property type="match status" value="1"/>
</dbReference>
<dbReference type="PROSITE" id="PS51883">
    <property type="entry name" value="OBG"/>
    <property type="match status" value="1"/>
</dbReference>
<sequence length="343" mass="37796">MEKFVDRVKIFVKGGKGGDGAVAFLREKYRPKGGPAGGDGGKGGDVILVATSSKHTLLDFKYKKHYIAQNGEPGKGKKMHGKDGEDLIIYVPVGTVVKDAQTGEVICDLVKEGQKCIVAKGGKGGRGNARFATPTNQAPTYAEKGQKGEERWIILELKLIADVGLVGFPNAGKSTLLSRLTRAKPKIADYPFTTLSPNLGVMELDWERRLVIADIPGLIEDAHKGAGLGHEFLRHIERTKFLAHVIDVSDFREREPVQAFEAINRELELYSPKLAQKPQIVVANKIDALSDRSLLSELEKYFKEKGYEFYAVSALTGEGIEELKEGLWKKYEEIRDKESAQVT</sequence>
<evidence type="ECO:0000255" key="1">
    <source>
        <dbReference type="HAMAP-Rule" id="MF_01454"/>
    </source>
</evidence>
<evidence type="ECO:0000255" key="2">
    <source>
        <dbReference type="PROSITE-ProRule" id="PRU01231"/>
    </source>
</evidence>
<feature type="chain" id="PRO_0000385702" description="GTPase Obg">
    <location>
        <begin position="1"/>
        <end position="343"/>
    </location>
</feature>
<feature type="domain" description="Obg" evidence="2">
    <location>
        <begin position="2"/>
        <end position="160"/>
    </location>
</feature>
<feature type="domain" description="OBG-type G" evidence="1">
    <location>
        <begin position="161"/>
        <end position="332"/>
    </location>
</feature>
<feature type="binding site" evidence="1">
    <location>
        <begin position="167"/>
        <end position="174"/>
    </location>
    <ligand>
        <name>GTP</name>
        <dbReference type="ChEBI" id="CHEBI:37565"/>
    </ligand>
</feature>
<feature type="binding site" evidence="1">
    <location>
        <position position="174"/>
    </location>
    <ligand>
        <name>Mg(2+)</name>
        <dbReference type="ChEBI" id="CHEBI:18420"/>
    </ligand>
</feature>
<feature type="binding site" evidence="1">
    <location>
        <begin position="192"/>
        <end position="196"/>
    </location>
    <ligand>
        <name>GTP</name>
        <dbReference type="ChEBI" id="CHEBI:37565"/>
    </ligand>
</feature>
<feature type="binding site" evidence="1">
    <location>
        <position position="194"/>
    </location>
    <ligand>
        <name>Mg(2+)</name>
        <dbReference type="ChEBI" id="CHEBI:18420"/>
    </ligand>
</feature>
<feature type="binding site" evidence="1">
    <location>
        <begin position="214"/>
        <end position="217"/>
    </location>
    <ligand>
        <name>GTP</name>
        <dbReference type="ChEBI" id="CHEBI:37565"/>
    </ligand>
</feature>
<feature type="binding site" evidence="1">
    <location>
        <begin position="284"/>
        <end position="287"/>
    </location>
    <ligand>
        <name>GTP</name>
        <dbReference type="ChEBI" id="CHEBI:37565"/>
    </ligand>
</feature>
<feature type="binding site" evidence="1">
    <location>
        <begin position="313"/>
        <end position="315"/>
    </location>
    <ligand>
        <name>GTP</name>
        <dbReference type="ChEBI" id="CHEBI:37565"/>
    </ligand>
</feature>
<reference key="1">
    <citation type="journal article" date="1998" name="Nature">
        <title>The complete genome of the hyperthermophilic bacterium Aquifex aeolicus.</title>
        <authorList>
            <person name="Deckert G."/>
            <person name="Warren P.V."/>
            <person name="Gaasterland T."/>
            <person name="Young W.G."/>
            <person name="Lenox A.L."/>
            <person name="Graham D.E."/>
            <person name="Overbeek R."/>
            <person name="Snead M.A."/>
            <person name="Keller M."/>
            <person name="Aujay M."/>
            <person name="Huber R."/>
            <person name="Feldman R.A."/>
            <person name="Short J.M."/>
            <person name="Olsen G.J."/>
            <person name="Swanson R.V."/>
        </authorList>
    </citation>
    <scope>NUCLEOTIDE SEQUENCE [LARGE SCALE GENOMIC DNA]</scope>
    <source>
        <strain>VF5</strain>
    </source>
</reference>
<proteinExistence type="inferred from homology"/>
<protein>
    <recommendedName>
        <fullName evidence="1">GTPase Obg</fullName>
        <ecNumber evidence="1">3.6.5.-</ecNumber>
    </recommendedName>
    <alternativeName>
        <fullName evidence="1">GTP-binding protein Obg</fullName>
    </alternativeName>
</protein>
<comment type="function">
    <text evidence="1">An essential GTPase which binds GTP, GDP and possibly (p)ppGpp with moderate affinity, with high nucleotide exchange rates and a fairly low GTP hydrolysis rate. Plays a role in control of the cell cycle, stress response, ribosome biogenesis and in those bacteria that undergo differentiation, in morphogenesis control.</text>
</comment>
<comment type="cofactor">
    <cofactor evidence="1">
        <name>Mg(2+)</name>
        <dbReference type="ChEBI" id="CHEBI:18420"/>
    </cofactor>
</comment>
<comment type="subunit">
    <text evidence="1">Monomer.</text>
</comment>
<comment type="subcellular location">
    <subcellularLocation>
        <location evidence="1">Cytoplasm</location>
    </subcellularLocation>
</comment>
<comment type="similarity">
    <text evidence="1">Belongs to the TRAFAC class OBG-HflX-like GTPase superfamily. OBG GTPase family.</text>
</comment>
<organism>
    <name type="scientific">Aquifex aeolicus (strain VF5)</name>
    <dbReference type="NCBI Taxonomy" id="224324"/>
    <lineage>
        <taxon>Bacteria</taxon>
        <taxon>Pseudomonadati</taxon>
        <taxon>Aquificota</taxon>
        <taxon>Aquificia</taxon>
        <taxon>Aquificales</taxon>
        <taxon>Aquificaceae</taxon>
        <taxon>Aquifex</taxon>
    </lineage>
</organism>